<organism>
    <name type="scientific">Dictyostelium discoideum</name>
    <name type="common">Social amoeba</name>
    <dbReference type="NCBI Taxonomy" id="44689"/>
    <lineage>
        <taxon>Eukaryota</taxon>
        <taxon>Amoebozoa</taxon>
        <taxon>Evosea</taxon>
        <taxon>Eumycetozoa</taxon>
        <taxon>Dictyostelia</taxon>
        <taxon>Dictyosteliales</taxon>
        <taxon>Dictyosteliaceae</taxon>
        <taxon>Dictyostelium</taxon>
    </lineage>
</organism>
<name>SYWC_DICDI</name>
<evidence type="ECO:0000250" key="1"/>
<evidence type="ECO:0000305" key="2"/>
<keyword id="KW-0030">Aminoacyl-tRNA synthetase</keyword>
<keyword id="KW-0067">ATP-binding</keyword>
<keyword id="KW-0963">Cytoplasm</keyword>
<keyword id="KW-0436">Ligase</keyword>
<keyword id="KW-0547">Nucleotide-binding</keyword>
<keyword id="KW-0648">Protein biosynthesis</keyword>
<keyword id="KW-1185">Reference proteome</keyword>
<protein>
    <recommendedName>
        <fullName>Tryptophan--tRNA ligase, cytoplasmic</fullName>
        <ecNumber>6.1.1.2</ecNumber>
    </recommendedName>
    <alternativeName>
        <fullName>Tryptophanyl-tRNA synthetase</fullName>
        <shortName>TrpRS</shortName>
    </alternativeName>
</protein>
<sequence>MTETTPTTNETKEQVITPWEVEAAPGGSVDYMKLVDQFGSTVISEELIARFEKVTGKRAHHFLRRGIFFSHRDLKEILDHHESGKKWFLYTGRGPSSGSLHFGHLLPFTFTKYLQDAFNVPLVVQMTNDEKFLWKDMTLEESIKFTHNNVKDIIALGFDIQKTFIFSNLEYIHHLYPNVLKIARCVNLNQIQNIFGFKESDAIGKFTFPPVQAAPCFPDSFPHIFPLNDPEIKNIRCLIPCAIDQDPYFRMTRDIAHRIGHQKPALIHSKFFPALQGHNTKMSASDTNSAVYLSDTPDQVKDKIKKHAFSGGGATKEEQEKNGADLSVDITYEYLTFMLEDDEQLKDIAHRYSTGKMMTGEIKQILIDLMNKIIIRHKEARAKITDEVLSTFMSIRKLNF</sequence>
<comment type="catalytic activity">
    <reaction>
        <text>tRNA(Trp) + L-tryptophan + ATP = L-tryptophyl-tRNA(Trp) + AMP + diphosphate + H(+)</text>
        <dbReference type="Rhea" id="RHEA:24080"/>
        <dbReference type="Rhea" id="RHEA-COMP:9671"/>
        <dbReference type="Rhea" id="RHEA-COMP:9705"/>
        <dbReference type="ChEBI" id="CHEBI:15378"/>
        <dbReference type="ChEBI" id="CHEBI:30616"/>
        <dbReference type="ChEBI" id="CHEBI:33019"/>
        <dbReference type="ChEBI" id="CHEBI:57912"/>
        <dbReference type="ChEBI" id="CHEBI:78442"/>
        <dbReference type="ChEBI" id="CHEBI:78535"/>
        <dbReference type="ChEBI" id="CHEBI:456215"/>
        <dbReference type="EC" id="6.1.1.2"/>
    </reaction>
</comment>
<comment type="subcellular location">
    <subcellularLocation>
        <location evidence="1">Cytoplasm</location>
    </subcellularLocation>
</comment>
<comment type="similarity">
    <text evidence="2">Belongs to the class-I aminoacyl-tRNA synthetase family.</text>
</comment>
<proteinExistence type="inferred from homology"/>
<reference key="1">
    <citation type="journal article" date="2005" name="Nature">
        <title>The genome of the social amoeba Dictyostelium discoideum.</title>
        <authorList>
            <person name="Eichinger L."/>
            <person name="Pachebat J.A."/>
            <person name="Gloeckner G."/>
            <person name="Rajandream M.A."/>
            <person name="Sucgang R."/>
            <person name="Berriman M."/>
            <person name="Song J."/>
            <person name="Olsen R."/>
            <person name="Szafranski K."/>
            <person name="Xu Q."/>
            <person name="Tunggal B."/>
            <person name="Kummerfeld S."/>
            <person name="Madera M."/>
            <person name="Konfortov B.A."/>
            <person name="Rivero F."/>
            <person name="Bankier A.T."/>
            <person name="Lehmann R."/>
            <person name="Hamlin N."/>
            <person name="Davies R."/>
            <person name="Gaudet P."/>
            <person name="Fey P."/>
            <person name="Pilcher K."/>
            <person name="Chen G."/>
            <person name="Saunders D."/>
            <person name="Sodergren E.J."/>
            <person name="Davis P."/>
            <person name="Kerhornou A."/>
            <person name="Nie X."/>
            <person name="Hall N."/>
            <person name="Anjard C."/>
            <person name="Hemphill L."/>
            <person name="Bason N."/>
            <person name="Farbrother P."/>
            <person name="Desany B."/>
            <person name="Just E."/>
            <person name="Morio T."/>
            <person name="Rost R."/>
            <person name="Churcher C.M."/>
            <person name="Cooper J."/>
            <person name="Haydock S."/>
            <person name="van Driessche N."/>
            <person name="Cronin A."/>
            <person name="Goodhead I."/>
            <person name="Muzny D.M."/>
            <person name="Mourier T."/>
            <person name="Pain A."/>
            <person name="Lu M."/>
            <person name="Harper D."/>
            <person name="Lindsay R."/>
            <person name="Hauser H."/>
            <person name="James K.D."/>
            <person name="Quiles M."/>
            <person name="Madan Babu M."/>
            <person name="Saito T."/>
            <person name="Buchrieser C."/>
            <person name="Wardroper A."/>
            <person name="Felder M."/>
            <person name="Thangavelu M."/>
            <person name="Johnson D."/>
            <person name="Knights A."/>
            <person name="Loulseged H."/>
            <person name="Mungall K.L."/>
            <person name="Oliver K."/>
            <person name="Price C."/>
            <person name="Quail M.A."/>
            <person name="Urushihara H."/>
            <person name="Hernandez J."/>
            <person name="Rabbinowitsch E."/>
            <person name="Steffen D."/>
            <person name="Sanders M."/>
            <person name="Ma J."/>
            <person name="Kohara Y."/>
            <person name="Sharp S."/>
            <person name="Simmonds M.N."/>
            <person name="Spiegler S."/>
            <person name="Tivey A."/>
            <person name="Sugano S."/>
            <person name="White B."/>
            <person name="Walker D."/>
            <person name="Woodward J.R."/>
            <person name="Winckler T."/>
            <person name="Tanaka Y."/>
            <person name="Shaulsky G."/>
            <person name="Schleicher M."/>
            <person name="Weinstock G.M."/>
            <person name="Rosenthal A."/>
            <person name="Cox E.C."/>
            <person name="Chisholm R.L."/>
            <person name="Gibbs R.A."/>
            <person name="Loomis W.F."/>
            <person name="Platzer M."/>
            <person name="Kay R.R."/>
            <person name="Williams J.G."/>
            <person name="Dear P.H."/>
            <person name="Noegel A.A."/>
            <person name="Barrell B.G."/>
            <person name="Kuspa A."/>
        </authorList>
    </citation>
    <scope>NUCLEOTIDE SEQUENCE [LARGE SCALE GENOMIC DNA]</scope>
    <source>
        <strain>AX4</strain>
    </source>
</reference>
<dbReference type="EC" id="6.1.1.2"/>
<dbReference type="EMBL" id="AAFI02000005">
    <property type="protein sequence ID" value="EAL72077.1"/>
    <property type="molecule type" value="Genomic_DNA"/>
</dbReference>
<dbReference type="RefSeq" id="XP_645983.1">
    <property type="nucleotide sequence ID" value="XM_640891.1"/>
</dbReference>
<dbReference type="SMR" id="Q55DZ8"/>
<dbReference type="FunCoup" id="Q55DZ8">
    <property type="interactions" value="834"/>
</dbReference>
<dbReference type="STRING" id="44689.Q55DZ8"/>
<dbReference type="PaxDb" id="44689-DDB0231245"/>
<dbReference type="EnsemblProtists" id="EAL72077">
    <property type="protein sequence ID" value="EAL72077"/>
    <property type="gene ID" value="DDB_G0269454"/>
</dbReference>
<dbReference type="GeneID" id="8616928"/>
<dbReference type="KEGG" id="ddi:DDB_G0269454"/>
<dbReference type="dictyBase" id="DDB_G0269454">
    <property type="gene designation" value="trpS"/>
</dbReference>
<dbReference type="VEuPathDB" id="AmoebaDB:DDB_G0269454"/>
<dbReference type="eggNOG" id="KOG2145">
    <property type="taxonomic scope" value="Eukaryota"/>
</dbReference>
<dbReference type="HOGENOM" id="CLU_032621_0_1_1"/>
<dbReference type="InParanoid" id="Q55DZ8"/>
<dbReference type="OMA" id="SIYHRFM"/>
<dbReference type="PhylomeDB" id="Q55DZ8"/>
<dbReference type="PRO" id="PR:Q55DZ8"/>
<dbReference type="Proteomes" id="UP000002195">
    <property type="component" value="Chromosome 1"/>
</dbReference>
<dbReference type="GO" id="GO:0005737">
    <property type="term" value="C:cytoplasm"/>
    <property type="evidence" value="ECO:0000318"/>
    <property type="project" value="GO_Central"/>
</dbReference>
<dbReference type="GO" id="GO:0005524">
    <property type="term" value="F:ATP binding"/>
    <property type="evidence" value="ECO:0007669"/>
    <property type="project" value="UniProtKB-KW"/>
</dbReference>
<dbReference type="GO" id="GO:0004830">
    <property type="term" value="F:tryptophan-tRNA ligase activity"/>
    <property type="evidence" value="ECO:0000250"/>
    <property type="project" value="dictyBase"/>
</dbReference>
<dbReference type="GO" id="GO:0006436">
    <property type="term" value="P:tryptophanyl-tRNA aminoacylation"/>
    <property type="evidence" value="ECO:0000318"/>
    <property type="project" value="GO_Central"/>
</dbReference>
<dbReference type="CDD" id="cd00806">
    <property type="entry name" value="TrpRS_core"/>
    <property type="match status" value="1"/>
</dbReference>
<dbReference type="FunFam" id="1.10.240.10:FF:000007">
    <property type="entry name" value="Tryptophan--tRNA ligase"/>
    <property type="match status" value="1"/>
</dbReference>
<dbReference type="FunFam" id="3.40.50.620:FF:000033">
    <property type="entry name" value="tryptophan--tRNA ligase, cytoplasmic"/>
    <property type="match status" value="1"/>
</dbReference>
<dbReference type="Gene3D" id="3.40.50.620">
    <property type="entry name" value="HUPs"/>
    <property type="match status" value="1"/>
</dbReference>
<dbReference type="Gene3D" id="1.10.240.10">
    <property type="entry name" value="Tyrosyl-Transfer RNA Synthetase"/>
    <property type="match status" value="1"/>
</dbReference>
<dbReference type="InterPro" id="IPR002305">
    <property type="entry name" value="aa-tRNA-synth_Ic"/>
</dbReference>
<dbReference type="InterPro" id="IPR014729">
    <property type="entry name" value="Rossmann-like_a/b/a_fold"/>
</dbReference>
<dbReference type="InterPro" id="IPR002306">
    <property type="entry name" value="Trp-tRNA-ligase"/>
</dbReference>
<dbReference type="NCBIfam" id="TIGR00233">
    <property type="entry name" value="trpS"/>
    <property type="match status" value="1"/>
</dbReference>
<dbReference type="PANTHER" id="PTHR10055:SF1">
    <property type="entry name" value="TRYPTOPHAN--TRNA LIGASE, CYTOPLASMIC"/>
    <property type="match status" value="1"/>
</dbReference>
<dbReference type="PANTHER" id="PTHR10055">
    <property type="entry name" value="TRYPTOPHANYL-TRNA SYNTHETASE"/>
    <property type="match status" value="1"/>
</dbReference>
<dbReference type="Pfam" id="PF00579">
    <property type="entry name" value="tRNA-synt_1b"/>
    <property type="match status" value="1"/>
</dbReference>
<dbReference type="PRINTS" id="PR01039">
    <property type="entry name" value="TRNASYNTHTRP"/>
</dbReference>
<dbReference type="SUPFAM" id="SSF52374">
    <property type="entry name" value="Nucleotidylyl transferase"/>
    <property type="match status" value="1"/>
</dbReference>
<accession>Q55DZ8</accession>
<feature type="chain" id="PRO_0000327792" description="Tryptophan--tRNA ligase, cytoplasmic">
    <location>
        <begin position="1"/>
        <end position="400"/>
    </location>
</feature>
<feature type="short sequence motif" description="'HIGH' region">
    <location>
        <begin position="95"/>
        <end position="104"/>
    </location>
</feature>
<feature type="short sequence motif" description="'KMSKS' region">
    <location>
        <begin position="281"/>
        <end position="285"/>
    </location>
</feature>
<gene>
    <name type="primary">trpS</name>
    <name type="ORF">DDB_G0269454</name>
</gene>